<accession>Q62809</accession>
<sequence>GGGGGPAGGAEDLAELDQLLRQRPSGAMPSEIKGLEFSEGLAQGKKQRLSKKLRRKLQMWLWSQTFCPVLYAWNDLGSRFWARYVKVGSCFSKRSCSVPEGMVCKPSKSVHLTVLRWRCQRRGGQRCGWIPIQYPIISECKCSC</sequence>
<proteinExistence type="evidence at transcript level"/>
<organism>
    <name type="scientific">Rattus norvegicus</name>
    <name type="common">Rat</name>
    <dbReference type="NCBI Taxonomy" id="10116"/>
    <lineage>
        <taxon>Eukaryota</taxon>
        <taxon>Metazoa</taxon>
        <taxon>Chordata</taxon>
        <taxon>Craniata</taxon>
        <taxon>Vertebrata</taxon>
        <taxon>Euteleostomi</taxon>
        <taxon>Mammalia</taxon>
        <taxon>Eutheria</taxon>
        <taxon>Euarchontoglires</taxon>
        <taxon>Glires</taxon>
        <taxon>Rodentia</taxon>
        <taxon>Myomorpha</taxon>
        <taxon>Muroidea</taxon>
        <taxon>Muridae</taxon>
        <taxon>Murinae</taxon>
        <taxon>Rattus</taxon>
    </lineage>
</organism>
<comment type="function">
    <text evidence="2 3">Essential for cartilage morphogenesis and joint formation. Inhibitor of bone morphogenetic proteins (BMP) signaling which is required for growth and patterning of the neural tube and somite (By similarity). Inhibits chondrocyte differentiation through its interaction with GDF5 and, probably, GDF6 (By similarity).</text>
</comment>
<comment type="subunit">
    <text evidence="3">Homodimer. Interacts with GDF5; inhibits chondrocyte differentiation.</text>
</comment>
<comment type="subcellular location">
    <subcellularLocation>
        <location>Secreted</location>
    </subcellularLocation>
</comment>
<comment type="tissue specificity">
    <text>Prominently expressed in the CNS. High levels found in mitral and tufted cells in the olfactory bulb, piriform cortex of the brain and Purkinje cells in the cerebellum. Low level expression seen in the lung, skeletal muscle and skin.</text>
</comment>
<comment type="developmental stage">
    <text>First detected at embryonic day 9 and in the brain, expression increases steadily from embryonic day 17 to postnatal day 19.</text>
</comment>
<comment type="similarity">
    <text evidence="5">Belongs to the noggin family.</text>
</comment>
<feature type="signal peptide" evidence="4">
    <location>
        <begin position="1" status="less than"/>
        <end position="4"/>
    </location>
</feature>
<feature type="chain" id="PRO_0000019815" description="Noggin">
    <location>
        <begin position="5"/>
        <end position="144"/>
    </location>
</feature>
<feature type="disulfide bond" evidence="1">
    <location>
        <begin position="67"/>
        <end position="104"/>
    </location>
</feature>
<feature type="disulfide bond" evidence="1">
    <location>
        <begin position="90"/>
        <end position="140"/>
    </location>
</feature>
<feature type="disulfide bond" evidence="1">
    <location>
        <begin position="96"/>
        <end position="142"/>
    </location>
</feature>
<feature type="disulfide bond" evidence="1">
    <location>
        <begin position="119"/>
        <end position="127"/>
    </location>
</feature>
<feature type="non-terminal residue">
    <location>
        <position position="1"/>
    </location>
</feature>
<evidence type="ECO:0000250" key="1"/>
<evidence type="ECO:0000250" key="2">
    <source>
        <dbReference type="UniProtKB" id="P97466"/>
    </source>
</evidence>
<evidence type="ECO:0000250" key="3">
    <source>
        <dbReference type="UniProtKB" id="Q13253"/>
    </source>
</evidence>
<evidence type="ECO:0000255" key="4"/>
<evidence type="ECO:0000305" key="5"/>
<protein>
    <recommendedName>
        <fullName>Noggin</fullName>
    </recommendedName>
</protein>
<reference key="1">
    <citation type="journal article" date="1995" name="J. Neurosci.">
        <title>Identification of mammalian noggin and its expression in the adult nervous system.</title>
        <authorList>
            <person name="Valenzuela D.M."/>
            <person name="Economides A.N."/>
            <person name="Rojas E."/>
            <person name="Lamb T.M."/>
            <person name="Nunez L."/>
            <person name="Jones P."/>
            <person name="Ip N.Y."/>
            <person name="Espinosa R. III"/>
            <person name="Brannan C.I."/>
            <person name="Gilbert D.J."/>
            <person name="Copeland N.G."/>
            <person name="Jenkins N.A."/>
            <person name="Le Beau M.M."/>
            <person name="Harland R.M."/>
            <person name="Yancopoulos G.D."/>
        </authorList>
    </citation>
    <scope>NUCLEOTIDE SEQUENCE [MRNA]</scope>
    <source>
        <strain>Sprague-Dawley</strain>
        <tissue>Brain</tissue>
    </source>
</reference>
<gene>
    <name type="primary">Nog</name>
</gene>
<name>NOGG_RAT</name>
<keyword id="KW-0891">Chondrogenesis</keyword>
<keyword id="KW-0217">Developmental protein</keyword>
<keyword id="KW-0221">Differentiation</keyword>
<keyword id="KW-1015">Disulfide bond</keyword>
<keyword id="KW-1185">Reference proteome</keyword>
<keyword id="KW-0964">Secreted</keyword>
<keyword id="KW-0732">Signal</keyword>
<dbReference type="EMBL" id="U31203">
    <property type="protein sequence ID" value="AAA83260.1"/>
    <property type="molecule type" value="mRNA"/>
</dbReference>
<dbReference type="SMR" id="Q62809"/>
<dbReference type="FunCoup" id="Q62809">
    <property type="interactions" value="560"/>
</dbReference>
<dbReference type="STRING" id="10116.ENSRNOP00000030212"/>
<dbReference type="PhosphoSitePlus" id="Q62809"/>
<dbReference type="PaxDb" id="10116-ENSRNOP00000030212"/>
<dbReference type="AGR" id="RGD:3183"/>
<dbReference type="RGD" id="3183">
    <property type="gene designation" value="Nog"/>
</dbReference>
<dbReference type="eggNOG" id="KOG4485">
    <property type="taxonomic scope" value="Eukaryota"/>
</dbReference>
<dbReference type="InParanoid" id="Q62809"/>
<dbReference type="PhylomeDB" id="Q62809"/>
<dbReference type="Proteomes" id="UP000002494">
    <property type="component" value="Unplaced"/>
</dbReference>
<dbReference type="GO" id="GO:0030424">
    <property type="term" value="C:axon"/>
    <property type="evidence" value="ECO:0000314"/>
    <property type="project" value="RGD"/>
</dbReference>
<dbReference type="GO" id="GO:0005615">
    <property type="term" value="C:extracellular space"/>
    <property type="evidence" value="ECO:0000314"/>
    <property type="project" value="RGD"/>
</dbReference>
<dbReference type="GO" id="GO:0098793">
    <property type="term" value="C:presynapse"/>
    <property type="evidence" value="ECO:0007669"/>
    <property type="project" value="GOC"/>
</dbReference>
<dbReference type="GO" id="GO:0032991">
    <property type="term" value="C:protein-containing complex"/>
    <property type="evidence" value="ECO:0000314"/>
    <property type="project" value="RGD"/>
</dbReference>
<dbReference type="GO" id="GO:0019955">
    <property type="term" value="F:cytokine binding"/>
    <property type="evidence" value="ECO:0000266"/>
    <property type="project" value="RGD"/>
</dbReference>
<dbReference type="GO" id="GO:0042803">
    <property type="term" value="F:protein homodimerization activity"/>
    <property type="evidence" value="ECO:0000266"/>
    <property type="project" value="RGD"/>
</dbReference>
<dbReference type="GO" id="GO:0044877">
    <property type="term" value="F:protein-containing complex binding"/>
    <property type="evidence" value="ECO:0000314"/>
    <property type="project" value="RGD"/>
</dbReference>
<dbReference type="GO" id="GO:0048646">
    <property type="term" value="P:anatomical structure formation involved in morphogenesis"/>
    <property type="evidence" value="ECO:0000266"/>
    <property type="project" value="RGD"/>
</dbReference>
<dbReference type="GO" id="GO:0055009">
    <property type="term" value="P:atrial cardiac muscle tissue morphogenesis"/>
    <property type="evidence" value="ECO:0000266"/>
    <property type="project" value="RGD"/>
</dbReference>
<dbReference type="GO" id="GO:0048318">
    <property type="term" value="P:axial mesoderm development"/>
    <property type="evidence" value="ECO:0000266"/>
    <property type="project" value="RGD"/>
</dbReference>
<dbReference type="GO" id="GO:0007411">
    <property type="term" value="P:axon guidance"/>
    <property type="evidence" value="ECO:0000266"/>
    <property type="project" value="RGD"/>
</dbReference>
<dbReference type="GO" id="GO:0030509">
    <property type="term" value="P:BMP signaling pathway"/>
    <property type="evidence" value="ECO:0000266"/>
    <property type="project" value="RGD"/>
</dbReference>
<dbReference type="GO" id="GO:0007420">
    <property type="term" value="P:brain development"/>
    <property type="evidence" value="ECO:0000266"/>
    <property type="project" value="RGD"/>
</dbReference>
<dbReference type="GO" id="GO:0051216">
    <property type="term" value="P:cartilage development"/>
    <property type="evidence" value="ECO:0000266"/>
    <property type="project" value="RGD"/>
</dbReference>
<dbReference type="GO" id="GO:0021533">
    <property type="term" value="P:cell differentiation in hindbrain"/>
    <property type="evidence" value="ECO:0000266"/>
    <property type="project" value="RGD"/>
</dbReference>
<dbReference type="GO" id="GO:0008283">
    <property type="term" value="P:cell population proliferation"/>
    <property type="evidence" value="ECO:0000266"/>
    <property type="project" value="RGD"/>
</dbReference>
<dbReference type="GO" id="GO:0071773">
    <property type="term" value="P:cellular response to BMP stimulus"/>
    <property type="evidence" value="ECO:0000270"/>
    <property type="project" value="RGD"/>
</dbReference>
<dbReference type="GO" id="GO:0071456">
    <property type="term" value="P:cellular response to hypoxia"/>
    <property type="evidence" value="ECO:0000270"/>
    <property type="project" value="RGD"/>
</dbReference>
<dbReference type="GO" id="GO:0007417">
    <property type="term" value="P:central nervous system development"/>
    <property type="evidence" value="ECO:0000266"/>
    <property type="project" value="RGD"/>
</dbReference>
<dbReference type="GO" id="GO:1904888">
    <property type="term" value="P:cranial skeletal system development"/>
    <property type="evidence" value="ECO:0000266"/>
    <property type="project" value="RGD"/>
</dbReference>
<dbReference type="GO" id="GO:0009953">
    <property type="term" value="P:dorsal/ventral pattern formation"/>
    <property type="evidence" value="ECO:0000266"/>
    <property type="project" value="RGD"/>
</dbReference>
<dbReference type="GO" id="GO:0042733">
    <property type="term" value="P:embryonic digit morphogenesis"/>
    <property type="evidence" value="ECO:0000266"/>
    <property type="project" value="RGD"/>
</dbReference>
<dbReference type="GO" id="GO:0060272">
    <property type="term" value="P:embryonic skeletal joint morphogenesis"/>
    <property type="evidence" value="ECO:0000266"/>
    <property type="project" value="RGD"/>
</dbReference>
<dbReference type="GO" id="GO:0048706">
    <property type="term" value="P:embryonic skeletal system development"/>
    <property type="evidence" value="ECO:0000266"/>
    <property type="project" value="RGD"/>
</dbReference>
<dbReference type="GO" id="GO:0003272">
    <property type="term" value="P:endocardial cushion formation"/>
    <property type="evidence" value="ECO:0000266"/>
    <property type="project" value="RGD"/>
</dbReference>
<dbReference type="GO" id="GO:0007492">
    <property type="term" value="P:endoderm development"/>
    <property type="evidence" value="ECO:0000266"/>
    <property type="project" value="RGD"/>
</dbReference>
<dbReference type="GO" id="GO:0001706">
    <property type="term" value="P:endoderm formation"/>
    <property type="evidence" value="ECO:0000266"/>
    <property type="project" value="RGD"/>
</dbReference>
<dbReference type="GO" id="GO:0050673">
    <property type="term" value="P:epithelial cell proliferation"/>
    <property type="evidence" value="ECO:0000266"/>
    <property type="project" value="RGD"/>
</dbReference>
<dbReference type="GO" id="GO:0001837">
    <property type="term" value="P:epithelial to mesenchymal transition"/>
    <property type="evidence" value="ECO:0000250"/>
    <property type="project" value="UniProtKB"/>
</dbReference>
<dbReference type="GO" id="GO:0035640">
    <property type="term" value="P:exploration behavior"/>
    <property type="evidence" value="ECO:0000266"/>
    <property type="project" value="RGD"/>
</dbReference>
<dbReference type="GO" id="GO:0060325">
    <property type="term" value="P:face morphogenesis"/>
    <property type="evidence" value="ECO:0000266"/>
    <property type="project" value="RGD"/>
</dbReference>
<dbReference type="GO" id="GO:0008543">
    <property type="term" value="P:fibroblast growth factor receptor signaling pathway"/>
    <property type="evidence" value="ECO:0000266"/>
    <property type="project" value="RGD"/>
</dbReference>
<dbReference type="GO" id="GO:0030900">
    <property type="term" value="P:forebrain development"/>
    <property type="evidence" value="ECO:0000270"/>
    <property type="project" value="RGD"/>
</dbReference>
<dbReference type="GO" id="GO:0061384">
    <property type="term" value="P:heart trabecula morphogenesis"/>
    <property type="evidence" value="ECO:0000266"/>
    <property type="project" value="RGD"/>
</dbReference>
<dbReference type="GO" id="GO:0021766">
    <property type="term" value="P:hippocampus development"/>
    <property type="evidence" value="ECO:0000270"/>
    <property type="project" value="RGD"/>
</dbReference>
<dbReference type="GO" id="GO:0001701">
    <property type="term" value="P:in utero embryonic development"/>
    <property type="evidence" value="ECO:0000266"/>
    <property type="project" value="RGD"/>
</dbReference>
<dbReference type="GO" id="GO:0060173">
    <property type="term" value="P:limb development"/>
    <property type="evidence" value="ECO:0000266"/>
    <property type="project" value="RGD"/>
</dbReference>
<dbReference type="GO" id="GO:0060291">
    <property type="term" value="P:long-term synaptic potentiation"/>
    <property type="evidence" value="ECO:0000266"/>
    <property type="project" value="RGD"/>
</dbReference>
<dbReference type="GO" id="GO:0060425">
    <property type="term" value="P:lung morphogenesis"/>
    <property type="evidence" value="ECO:0000266"/>
    <property type="project" value="RGD"/>
</dbReference>
<dbReference type="GO" id="GO:0003149">
    <property type="term" value="P:membranous septum morphogenesis"/>
    <property type="evidence" value="ECO:0000266"/>
    <property type="project" value="RGD"/>
</dbReference>
<dbReference type="GO" id="GO:0007613">
    <property type="term" value="P:memory"/>
    <property type="evidence" value="ECO:0000315"/>
    <property type="project" value="RGD"/>
</dbReference>
<dbReference type="GO" id="GO:0048762">
    <property type="term" value="P:mesenchymal cell differentiation"/>
    <property type="evidence" value="ECO:0000315"/>
    <property type="project" value="RGD"/>
</dbReference>
<dbReference type="GO" id="GO:0001707">
    <property type="term" value="P:mesoderm formation"/>
    <property type="evidence" value="ECO:0000266"/>
    <property type="project" value="RGD"/>
</dbReference>
<dbReference type="GO" id="GO:0042474">
    <property type="term" value="P:middle ear morphogenesis"/>
    <property type="evidence" value="ECO:0000266"/>
    <property type="project" value="RGD"/>
</dbReference>
<dbReference type="GO" id="GO:0008045">
    <property type="term" value="P:motor neuron axon guidance"/>
    <property type="evidence" value="ECO:0000266"/>
    <property type="project" value="RGD"/>
</dbReference>
<dbReference type="GO" id="GO:2001234">
    <property type="term" value="P:negative regulation of apoptotic signaling pathway"/>
    <property type="evidence" value="ECO:0000266"/>
    <property type="project" value="RGD"/>
</dbReference>
<dbReference type="GO" id="GO:0048712">
    <property type="term" value="P:negative regulation of astrocyte differentiation"/>
    <property type="evidence" value="ECO:0000315"/>
    <property type="project" value="RGD"/>
</dbReference>
<dbReference type="GO" id="GO:0030514">
    <property type="term" value="P:negative regulation of BMP signaling pathway"/>
    <property type="evidence" value="ECO:0000250"/>
    <property type="project" value="UniProtKB"/>
</dbReference>
<dbReference type="GO" id="GO:0090090">
    <property type="term" value="P:negative regulation of canonical Wnt signaling pathway"/>
    <property type="evidence" value="ECO:0000266"/>
    <property type="project" value="RGD"/>
</dbReference>
<dbReference type="GO" id="GO:0062044">
    <property type="term" value="P:negative regulation of cardiac epithelial to mesenchymal transition"/>
    <property type="evidence" value="ECO:0000266"/>
    <property type="project" value="RGD"/>
</dbReference>
<dbReference type="GO" id="GO:0060044">
    <property type="term" value="P:negative regulation of cardiac muscle cell proliferation"/>
    <property type="evidence" value="ECO:0000250"/>
    <property type="project" value="UniProtKB"/>
</dbReference>
<dbReference type="GO" id="GO:0061037">
    <property type="term" value="P:negative regulation of cartilage development"/>
    <property type="evidence" value="ECO:0000266"/>
    <property type="project" value="RGD"/>
</dbReference>
<dbReference type="GO" id="GO:0030336">
    <property type="term" value="P:negative regulation of cell migration"/>
    <property type="evidence" value="ECO:0000266"/>
    <property type="project" value="RGD"/>
</dbReference>
<dbReference type="GO" id="GO:0010629">
    <property type="term" value="P:negative regulation of gene expression"/>
    <property type="evidence" value="ECO:0000266"/>
    <property type="project" value="RGD"/>
</dbReference>
<dbReference type="GO" id="GO:0045668">
    <property type="term" value="P:negative regulation of osteoblast differentiation"/>
    <property type="evidence" value="ECO:0000266"/>
    <property type="project" value="RGD"/>
</dbReference>
<dbReference type="GO" id="GO:0060392">
    <property type="term" value="P:negative regulation of SMAD protein signal transduction"/>
    <property type="evidence" value="ECO:0000266"/>
    <property type="project" value="RGD"/>
</dbReference>
<dbReference type="GO" id="GO:0000122">
    <property type="term" value="P:negative regulation of transcription by RNA polymerase II"/>
    <property type="evidence" value="ECO:0000266"/>
    <property type="project" value="RGD"/>
</dbReference>
<dbReference type="GO" id="GO:0021999">
    <property type="term" value="P:neural plate anterior/posterior regionalization"/>
    <property type="evidence" value="ECO:0000266"/>
    <property type="project" value="RGD"/>
</dbReference>
<dbReference type="GO" id="GO:0001839">
    <property type="term" value="P:neural plate morphogenesis"/>
    <property type="evidence" value="ECO:0000266"/>
    <property type="project" value="RGD"/>
</dbReference>
<dbReference type="GO" id="GO:0001843">
    <property type="term" value="P:neural tube closure"/>
    <property type="evidence" value="ECO:0000266"/>
    <property type="project" value="RGD"/>
</dbReference>
<dbReference type="GO" id="GO:0021915">
    <property type="term" value="P:neural tube development"/>
    <property type="evidence" value="ECO:0000266"/>
    <property type="project" value="RGD"/>
</dbReference>
<dbReference type="GO" id="GO:0038092">
    <property type="term" value="P:nodal signaling pathway"/>
    <property type="evidence" value="ECO:0000266"/>
    <property type="project" value="RGD"/>
</dbReference>
<dbReference type="GO" id="GO:0048570">
    <property type="term" value="P:notochord morphogenesis"/>
    <property type="evidence" value="ECO:0000266"/>
    <property type="project" value="RGD"/>
</dbReference>
<dbReference type="GO" id="GO:0001503">
    <property type="term" value="P:ossification"/>
    <property type="evidence" value="ECO:0000270"/>
    <property type="project" value="RGD"/>
</dbReference>
<dbReference type="GO" id="GO:0001649">
    <property type="term" value="P:osteoblast differentiation"/>
    <property type="evidence" value="ECO:0000250"/>
    <property type="project" value="UniProtKB"/>
</dbReference>
<dbReference type="GO" id="GO:0003151">
    <property type="term" value="P:outflow tract morphogenesis"/>
    <property type="evidence" value="ECO:0000266"/>
    <property type="project" value="RGD"/>
</dbReference>
<dbReference type="GO" id="GO:0007389">
    <property type="term" value="P:pattern specification process"/>
    <property type="evidence" value="ECO:0000266"/>
    <property type="project" value="RGD"/>
</dbReference>
<dbReference type="GO" id="GO:0061626">
    <property type="term" value="P:pharyngeal arch artery morphogenesis"/>
    <property type="evidence" value="ECO:0000266"/>
    <property type="project" value="RGD"/>
</dbReference>
<dbReference type="GO" id="GO:0021983">
    <property type="term" value="P:pituitary gland development"/>
    <property type="evidence" value="ECO:0000266"/>
    <property type="project" value="RGD"/>
</dbReference>
<dbReference type="GO" id="GO:0090190">
    <property type="term" value="P:positive regulation of branching involved in ureteric bud morphogenesis"/>
    <property type="evidence" value="ECO:0000250"/>
    <property type="project" value="UniProtKB"/>
</dbReference>
<dbReference type="GO" id="GO:0008284">
    <property type="term" value="P:positive regulation of cell population proliferation"/>
    <property type="evidence" value="ECO:0000315"/>
    <property type="project" value="RGD"/>
</dbReference>
<dbReference type="GO" id="GO:0050679">
    <property type="term" value="P:positive regulation of epithelial cell proliferation"/>
    <property type="evidence" value="ECO:0000266"/>
    <property type="project" value="RGD"/>
</dbReference>
<dbReference type="GO" id="GO:0010628">
    <property type="term" value="P:positive regulation of gene expression"/>
    <property type="evidence" value="ECO:0000266"/>
    <property type="project" value="RGD"/>
</dbReference>
<dbReference type="GO" id="GO:0090193">
    <property type="term" value="P:positive regulation of glomerulus development"/>
    <property type="evidence" value="ECO:0000250"/>
    <property type="project" value="UniProtKB"/>
</dbReference>
<dbReference type="GO" id="GO:0070447">
    <property type="term" value="P:positive regulation of oligodendrocyte progenitor proliferation"/>
    <property type="evidence" value="ECO:0000315"/>
    <property type="project" value="RGD"/>
</dbReference>
<dbReference type="GO" id="GO:0045944">
    <property type="term" value="P:positive regulation of transcription by RNA polymerase II"/>
    <property type="evidence" value="ECO:0000266"/>
    <property type="project" value="RGD"/>
</dbReference>
<dbReference type="GO" id="GO:0099171">
    <property type="term" value="P:presynaptic modulation of chemical synaptic transmission"/>
    <property type="evidence" value="ECO:0000266"/>
    <property type="project" value="RGD"/>
</dbReference>
<dbReference type="GO" id="GO:0060513">
    <property type="term" value="P:prostatic bud formation"/>
    <property type="evidence" value="ECO:0000266"/>
    <property type="project" value="RGD"/>
</dbReference>
<dbReference type="GO" id="GO:0030510">
    <property type="term" value="P:regulation of BMP signaling pathway"/>
    <property type="evidence" value="ECO:0000266"/>
    <property type="project" value="RGD"/>
</dbReference>
<dbReference type="GO" id="GO:0040036">
    <property type="term" value="P:regulation of fibroblast growth factor receptor signaling pathway"/>
    <property type="evidence" value="ECO:0000266"/>
    <property type="project" value="RGD"/>
</dbReference>
<dbReference type="GO" id="GO:0048168">
    <property type="term" value="P:regulation of neuronal synaptic plasticity"/>
    <property type="evidence" value="ECO:0000266"/>
    <property type="project" value="RGD"/>
</dbReference>
<dbReference type="GO" id="GO:1990926">
    <property type="term" value="P:short-term synaptic potentiation"/>
    <property type="evidence" value="ECO:0000266"/>
    <property type="project" value="RGD"/>
</dbReference>
<dbReference type="GO" id="GO:0001501">
    <property type="term" value="P:skeletal system development"/>
    <property type="evidence" value="ECO:0000266"/>
    <property type="project" value="RGD"/>
</dbReference>
<dbReference type="GO" id="GO:0007224">
    <property type="term" value="P:smoothened signaling pathway"/>
    <property type="evidence" value="ECO:0000266"/>
    <property type="project" value="RGD"/>
</dbReference>
<dbReference type="GO" id="GO:0035019">
    <property type="term" value="P:somatic stem cell population maintenance"/>
    <property type="evidence" value="ECO:0000266"/>
    <property type="project" value="RGD"/>
</dbReference>
<dbReference type="GO" id="GO:0061053">
    <property type="term" value="P:somite development"/>
    <property type="evidence" value="ECO:0000266"/>
    <property type="project" value="RGD"/>
</dbReference>
<dbReference type="GO" id="GO:0021510">
    <property type="term" value="P:spinal cord development"/>
    <property type="evidence" value="ECO:0000266"/>
    <property type="project" value="RGD"/>
</dbReference>
<dbReference type="GO" id="GO:0048863">
    <property type="term" value="P:stem cell differentiation"/>
    <property type="evidence" value="ECO:0000266"/>
    <property type="project" value="RGD"/>
</dbReference>
<dbReference type="GO" id="GO:0001657">
    <property type="term" value="P:ureteric bud development"/>
    <property type="evidence" value="ECO:0000266"/>
    <property type="project" value="RGD"/>
</dbReference>
<dbReference type="GO" id="GO:0060676">
    <property type="term" value="P:ureteric bud formation"/>
    <property type="evidence" value="ECO:0000266"/>
    <property type="project" value="RGD"/>
</dbReference>
<dbReference type="GO" id="GO:0001655">
    <property type="term" value="P:urogenital system development"/>
    <property type="evidence" value="ECO:0000266"/>
    <property type="project" value="RGD"/>
</dbReference>
<dbReference type="GO" id="GO:0003223">
    <property type="term" value="P:ventricular compact myocardium morphogenesis"/>
    <property type="evidence" value="ECO:0000266"/>
    <property type="project" value="RGD"/>
</dbReference>
<dbReference type="GO" id="GO:0060412">
    <property type="term" value="P:ventricular septum morphogenesis"/>
    <property type="evidence" value="ECO:0000266"/>
    <property type="project" value="RGD"/>
</dbReference>
<dbReference type="GO" id="GO:0008542">
    <property type="term" value="P:visual learning"/>
    <property type="evidence" value="ECO:0000315"/>
    <property type="project" value="RGD"/>
</dbReference>
<dbReference type="GO" id="GO:0042060">
    <property type="term" value="P:wound healing"/>
    <property type="evidence" value="ECO:0000250"/>
    <property type="project" value="UniProtKB"/>
</dbReference>
<dbReference type="Gene3D" id="2.10.90.10">
    <property type="entry name" value="Cystine-knot cytokines"/>
    <property type="match status" value="1"/>
</dbReference>
<dbReference type="InterPro" id="IPR029034">
    <property type="entry name" value="Cystine-knot_cytokine"/>
</dbReference>
<dbReference type="InterPro" id="IPR008717">
    <property type="entry name" value="Noggin"/>
</dbReference>
<dbReference type="PANTHER" id="PTHR10494">
    <property type="entry name" value="BONE MORPHOGENETIC PROTEIN INHIBITOR, NOGGIN"/>
    <property type="match status" value="1"/>
</dbReference>
<dbReference type="PANTHER" id="PTHR10494:SF5">
    <property type="entry name" value="NOGGIN"/>
    <property type="match status" value="1"/>
</dbReference>
<dbReference type="Pfam" id="PF05806">
    <property type="entry name" value="Noggin"/>
    <property type="match status" value="1"/>
</dbReference>
<dbReference type="SUPFAM" id="SSF57501">
    <property type="entry name" value="Cystine-knot cytokines"/>
    <property type="match status" value="1"/>
</dbReference>